<protein>
    <recommendedName>
        <fullName evidence="1">Probable tRNA pseudouridine synthase D</fullName>
        <ecNumber evidence="1">5.4.99.27</ecNumber>
    </recommendedName>
    <alternativeName>
        <fullName evidence="1">tRNA pseudouridine(13) synthase</fullName>
    </alternativeName>
    <alternativeName>
        <fullName evidence="1">tRNA pseudouridylate synthase D</fullName>
    </alternativeName>
    <alternativeName>
        <fullName evidence="1">tRNA-uridine isomerase D</fullName>
    </alternativeName>
</protein>
<feature type="chain" id="PRO_1000136857" description="Probable tRNA pseudouridine synthase D">
    <location>
        <begin position="1"/>
        <end position="416"/>
    </location>
</feature>
<feature type="domain" description="TRUD" evidence="1">
    <location>
        <begin position="158"/>
        <end position="379"/>
    </location>
</feature>
<feature type="active site" description="Nucleophile" evidence="1">
    <location>
        <position position="83"/>
    </location>
</feature>
<reference key="1">
    <citation type="journal article" date="2008" name="J. Bacteriol.">
        <title>The complete genome sequence of Thermococcus onnurineus NA1 reveals a mixed heterotrophic and carboxydotrophic metabolism.</title>
        <authorList>
            <person name="Lee H.S."/>
            <person name="Kang S.G."/>
            <person name="Bae S.S."/>
            <person name="Lim J.K."/>
            <person name="Cho Y."/>
            <person name="Kim Y.J."/>
            <person name="Jeon J.H."/>
            <person name="Cha S.-S."/>
            <person name="Kwon K.K."/>
            <person name="Kim H.-T."/>
            <person name="Park C.-J."/>
            <person name="Lee H.-W."/>
            <person name="Kim S.I."/>
            <person name="Chun J."/>
            <person name="Colwell R.R."/>
            <person name="Kim S.-J."/>
            <person name="Lee J.-H."/>
        </authorList>
    </citation>
    <scope>NUCLEOTIDE SEQUENCE [LARGE SCALE GENOMIC DNA]</scope>
    <source>
        <strain>NA1</strain>
    </source>
</reference>
<sequence>MDYREFFSQFKYLSEKPGIGGRIKAQPEDFIVMEEPLRSAFDGKKYAIFLLKKRNWDTMAAVKEIAKRAGISYKDIGFAGTKDRHAVTYQYISVPRDAKEKVEAVRIKDIELRFVSYGRALKLGHLLGNRFKIIVRDVDESAFERTKEIVRELRSKGGFPNYFGYQRFGERRVTNHLIGKLLLKGDFEGAARLFLGAHGGGMEGDEARKNFWETGDVNRALEEFPGFLRYERAMLYRYKETGSWRKAFLSLPLPIMRIFIHAYQSYLFNLYISRRIEEGLPLNEALVGDIVVQIKGGIPYRDRTYRVTETNIDFVKEKIRKDEAMVSGPLFGFSMRRARGVPGRLEEELLAEENLSLKDFKRLPKPMAEPGGRRELLIRPLGLTYGYVPSVGMCFRFFLPKGVYATSVLREIMKDH</sequence>
<accession>B6YTE4</accession>
<comment type="function">
    <text evidence="1">Could be responsible for synthesis of pseudouridine from uracil-13 in transfer RNAs.</text>
</comment>
<comment type="catalytic activity">
    <reaction evidence="1">
        <text>uridine(13) in tRNA = pseudouridine(13) in tRNA</text>
        <dbReference type="Rhea" id="RHEA:42540"/>
        <dbReference type="Rhea" id="RHEA-COMP:10105"/>
        <dbReference type="Rhea" id="RHEA-COMP:10106"/>
        <dbReference type="ChEBI" id="CHEBI:65314"/>
        <dbReference type="ChEBI" id="CHEBI:65315"/>
        <dbReference type="EC" id="5.4.99.27"/>
    </reaction>
</comment>
<comment type="similarity">
    <text evidence="1">Belongs to the pseudouridine synthase TruD family.</text>
</comment>
<gene>
    <name evidence="1" type="primary">truD</name>
    <name type="ordered locus">TON_0346</name>
</gene>
<dbReference type="EC" id="5.4.99.27" evidence="1"/>
<dbReference type="EMBL" id="CP000855">
    <property type="protein sequence ID" value="ACJ15831.1"/>
    <property type="molecule type" value="Genomic_DNA"/>
</dbReference>
<dbReference type="RefSeq" id="WP_012571303.1">
    <property type="nucleotide sequence ID" value="NC_011529.1"/>
</dbReference>
<dbReference type="SMR" id="B6YTE4"/>
<dbReference type="STRING" id="523850.TON_0346"/>
<dbReference type="GeneID" id="7018009"/>
<dbReference type="KEGG" id="ton:TON_0346"/>
<dbReference type="PATRIC" id="fig|523850.10.peg.349"/>
<dbReference type="eggNOG" id="arCOG04252">
    <property type="taxonomic scope" value="Archaea"/>
</dbReference>
<dbReference type="HOGENOM" id="CLU_005281_4_1_2"/>
<dbReference type="OrthoDB" id="1798at2157"/>
<dbReference type="Proteomes" id="UP000002727">
    <property type="component" value="Chromosome"/>
</dbReference>
<dbReference type="GO" id="GO:0003723">
    <property type="term" value="F:RNA binding"/>
    <property type="evidence" value="ECO:0007669"/>
    <property type="project" value="InterPro"/>
</dbReference>
<dbReference type="GO" id="GO:0160150">
    <property type="term" value="F:tRNA pseudouridine(13) synthase activity"/>
    <property type="evidence" value="ECO:0007669"/>
    <property type="project" value="UniProtKB-EC"/>
</dbReference>
<dbReference type="GO" id="GO:0031119">
    <property type="term" value="P:tRNA pseudouridine synthesis"/>
    <property type="evidence" value="ECO:0007669"/>
    <property type="project" value="UniProtKB-UniRule"/>
</dbReference>
<dbReference type="FunFam" id="3.30.70.3160:FF:000001">
    <property type="entry name" value="Probable tRNA pseudouridine synthase D"/>
    <property type="match status" value="1"/>
</dbReference>
<dbReference type="Gene3D" id="1.10.1510.30">
    <property type="match status" value="1"/>
</dbReference>
<dbReference type="Gene3D" id="3.30.70.3160">
    <property type="match status" value="1"/>
</dbReference>
<dbReference type="Gene3D" id="3.30.2350.20">
    <property type="entry name" value="TruD, catalytic domain"/>
    <property type="match status" value="1"/>
</dbReference>
<dbReference type="HAMAP" id="MF_01082">
    <property type="entry name" value="TruD"/>
    <property type="match status" value="1"/>
</dbReference>
<dbReference type="InterPro" id="IPR020103">
    <property type="entry name" value="PsdUridine_synth_cat_dom_sf"/>
</dbReference>
<dbReference type="InterPro" id="IPR001656">
    <property type="entry name" value="PsdUridine_synth_TruD"/>
</dbReference>
<dbReference type="InterPro" id="IPR020119">
    <property type="entry name" value="PsdUridine_synth_TruD_CS"/>
</dbReference>
<dbReference type="InterPro" id="IPR011760">
    <property type="entry name" value="PsdUridine_synth_TruD_insert"/>
</dbReference>
<dbReference type="InterPro" id="IPR042214">
    <property type="entry name" value="TruD_catalytic"/>
</dbReference>
<dbReference type="NCBIfam" id="TIGR00094">
    <property type="entry name" value="tRNA_TruD_broad"/>
    <property type="match status" value="1"/>
</dbReference>
<dbReference type="PANTHER" id="PTHR13326:SF21">
    <property type="entry name" value="PSEUDOURIDYLATE SYNTHASE PUS7L"/>
    <property type="match status" value="1"/>
</dbReference>
<dbReference type="PANTHER" id="PTHR13326">
    <property type="entry name" value="TRNA PSEUDOURIDINE SYNTHASE D"/>
    <property type="match status" value="1"/>
</dbReference>
<dbReference type="Pfam" id="PF01142">
    <property type="entry name" value="TruD"/>
    <property type="match status" value="1"/>
</dbReference>
<dbReference type="PIRSF" id="PIRSF037016">
    <property type="entry name" value="Pseudouridin_synth_euk_prd"/>
    <property type="match status" value="1"/>
</dbReference>
<dbReference type="SUPFAM" id="SSF55120">
    <property type="entry name" value="Pseudouridine synthase"/>
    <property type="match status" value="1"/>
</dbReference>
<dbReference type="PROSITE" id="PS50984">
    <property type="entry name" value="TRUD"/>
    <property type="match status" value="1"/>
</dbReference>
<dbReference type="PROSITE" id="PS01268">
    <property type="entry name" value="UPF0024"/>
    <property type="match status" value="1"/>
</dbReference>
<name>TRUD_THEON</name>
<proteinExistence type="inferred from homology"/>
<organism>
    <name type="scientific">Thermococcus onnurineus (strain NA1)</name>
    <dbReference type="NCBI Taxonomy" id="523850"/>
    <lineage>
        <taxon>Archaea</taxon>
        <taxon>Methanobacteriati</taxon>
        <taxon>Methanobacteriota</taxon>
        <taxon>Thermococci</taxon>
        <taxon>Thermococcales</taxon>
        <taxon>Thermococcaceae</taxon>
        <taxon>Thermococcus</taxon>
    </lineage>
</organism>
<keyword id="KW-0413">Isomerase</keyword>
<keyword id="KW-0819">tRNA processing</keyword>
<evidence type="ECO:0000255" key="1">
    <source>
        <dbReference type="HAMAP-Rule" id="MF_01082"/>
    </source>
</evidence>